<evidence type="ECO:0000255" key="1">
    <source>
        <dbReference type="HAMAP-Rule" id="MF_00137"/>
    </source>
</evidence>
<reference key="1">
    <citation type="submission" date="2005-07" db="EMBL/GenBank/DDBJ databases">
        <title>Complete sequence of Synechococcus sp. CC9605.</title>
        <authorList>
            <consortium name="US DOE Joint Genome Institute"/>
            <person name="Copeland A."/>
            <person name="Lucas S."/>
            <person name="Lapidus A."/>
            <person name="Barry K."/>
            <person name="Detter J.C."/>
            <person name="Glavina T."/>
            <person name="Hammon N."/>
            <person name="Israni S."/>
            <person name="Pitluck S."/>
            <person name="Schmutz J."/>
            <person name="Martinez M."/>
            <person name="Larimer F."/>
            <person name="Land M."/>
            <person name="Kyrpides N."/>
            <person name="Ivanova N."/>
            <person name="Richardson P."/>
        </authorList>
    </citation>
    <scope>NUCLEOTIDE SEQUENCE [LARGE SCALE GENOMIC DNA]</scope>
    <source>
        <strain>CC9605</strain>
    </source>
</reference>
<gene>
    <name evidence="1" type="primary">purC</name>
    <name type="ordered locus">Syncc9605_2120</name>
</gene>
<dbReference type="EC" id="6.3.2.6" evidence="1"/>
<dbReference type="EMBL" id="CP000110">
    <property type="protein sequence ID" value="ABB35859.1"/>
    <property type="molecule type" value="Genomic_DNA"/>
</dbReference>
<dbReference type="RefSeq" id="WP_011365067.1">
    <property type="nucleotide sequence ID" value="NC_007516.1"/>
</dbReference>
<dbReference type="SMR" id="Q3AHS3"/>
<dbReference type="STRING" id="110662.Syncc9605_2120"/>
<dbReference type="KEGG" id="syd:Syncc9605_2120"/>
<dbReference type="eggNOG" id="COG0152">
    <property type="taxonomic scope" value="Bacteria"/>
</dbReference>
<dbReference type="HOGENOM" id="CLU_061495_2_0_3"/>
<dbReference type="OrthoDB" id="9801549at2"/>
<dbReference type="UniPathway" id="UPA00074">
    <property type="reaction ID" value="UER00131"/>
</dbReference>
<dbReference type="GO" id="GO:0005524">
    <property type="term" value="F:ATP binding"/>
    <property type="evidence" value="ECO:0007669"/>
    <property type="project" value="UniProtKB-KW"/>
</dbReference>
<dbReference type="GO" id="GO:0004639">
    <property type="term" value="F:phosphoribosylaminoimidazolesuccinocarboxamide synthase activity"/>
    <property type="evidence" value="ECO:0007669"/>
    <property type="project" value="UniProtKB-UniRule"/>
</dbReference>
<dbReference type="GO" id="GO:0006189">
    <property type="term" value="P:'de novo' IMP biosynthetic process"/>
    <property type="evidence" value="ECO:0007669"/>
    <property type="project" value="UniProtKB-UniRule"/>
</dbReference>
<dbReference type="GO" id="GO:0009236">
    <property type="term" value="P:cobalamin biosynthetic process"/>
    <property type="evidence" value="ECO:0007669"/>
    <property type="project" value="InterPro"/>
</dbReference>
<dbReference type="CDD" id="cd01415">
    <property type="entry name" value="SAICAR_synt_PurC"/>
    <property type="match status" value="1"/>
</dbReference>
<dbReference type="FunFam" id="3.30.470.20:FF:000006">
    <property type="entry name" value="Phosphoribosylaminoimidazole-succinocarboxamide synthase"/>
    <property type="match status" value="1"/>
</dbReference>
<dbReference type="Gene3D" id="3.30.470.20">
    <property type="entry name" value="ATP-grasp fold, B domain"/>
    <property type="match status" value="1"/>
</dbReference>
<dbReference type="Gene3D" id="3.30.200.20">
    <property type="entry name" value="Phosphorylase Kinase, domain 1"/>
    <property type="match status" value="1"/>
</dbReference>
<dbReference type="HAMAP" id="MF_00137">
    <property type="entry name" value="SAICAR_synth"/>
    <property type="match status" value="1"/>
</dbReference>
<dbReference type="InterPro" id="IPR028923">
    <property type="entry name" value="SAICAR_synt/ADE2_N"/>
</dbReference>
<dbReference type="InterPro" id="IPR033934">
    <property type="entry name" value="SAICAR_synt_PurC"/>
</dbReference>
<dbReference type="InterPro" id="IPR001636">
    <property type="entry name" value="SAICAR_synth"/>
</dbReference>
<dbReference type="InterPro" id="IPR050089">
    <property type="entry name" value="SAICAR_synthetase"/>
</dbReference>
<dbReference type="InterPro" id="IPR018236">
    <property type="entry name" value="SAICAR_synthetase_CS"/>
</dbReference>
<dbReference type="NCBIfam" id="TIGR00081">
    <property type="entry name" value="purC"/>
    <property type="match status" value="1"/>
</dbReference>
<dbReference type="PANTHER" id="PTHR43599">
    <property type="entry name" value="MULTIFUNCTIONAL PROTEIN ADE2"/>
    <property type="match status" value="1"/>
</dbReference>
<dbReference type="PANTHER" id="PTHR43599:SF3">
    <property type="entry name" value="SI:DKEY-6E2.2"/>
    <property type="match status" value="1"/>
</dbReference>
<dbReference type="Pfam" id="PF01259">
    <property type="entry name" value="SAICAR_synt"/>
    <property type="match status" value="1"/>
</dbReference>
<dbReference type="SUPFAM" id="SSF56104">
    <property type="entry name" value="SAICAR synthase-like"/>
    <property type="match status" value="1"/>
</dbReference>
<dbReference type="PROSITE" id="PS01057">
    <property type="entry name" value="SAICAR_SYNTHETASE_1"/>
    <property type="match status" value="1"/>
</dbReference>
<organism>
    <name type="scientific">Synechococcus sp. (strain CC9605)</name>
    <dbReference type="NCBI Taxonomy" id="110662"/>
    <lineage>
        <taxon>Bacteria</taxon>
        <taxon>Bacillati</taxon>
        <taxon>Cyanobacteriota</taxon>
        <taxon>Cyanophyceae</taxon>
        <taxon>Synechococcales</taxon>
        <taxon>Synechococcaceae</taxon>
        <taxon>Synechococcus</taxon>
    </lineage>
</organism>
<name>PUR7_SYNSC</name>
<feature type="chain" id="PRO_1000018804" description="Phosphoribosylaminoimidazole-succinocarboxamide synthase">
    <location>
        <begin position="1"/>
        <end position="250"/>
    </location>
</feature>
<keyword id="KW-0067">ATP-binding</keyword>
<keyword id="KW-0436">Ligase</keyword>
<keyword id="KW-0547">Nucleotide-binding</keyword>
<keyword id="KW-0658">Purine biosynthesis</keyword>
<sequence>MMPDHGELLYEGKAKRVFASTDPDRVLVEFKNDATAFNAQKKAQLDGKGRLNCQISARLFDLLEREGVPTHYCGLAGETWMLVRRVRIIPLEVVLRNIATGSLCRQTPIAEGTAIEPALLDLYYKDDSLGDPLLTEARVQLLGVADTAQLSAIEQLARRVNAVLLPFFDELDLQLVDFKLELGLASDGTLLLADEISPDTCRLWDRRNSNAEDRILDKDRFRKDLGGVMEAYGEVLKRVQGNCPNPRNCL</sequence>
<comment type="catalytic activity">
    <reaction evidence="1">
        <text>5-amino-1-(5-phospho-D-ribosyl)imidazole-4-carboxylate + L-aspartate + ATP = (2S)-2-[5-amino-1-(5-phospho-beta-D-ribosyl)imidazole-4-carboxamido]succinate + ADP + phosphate + 2 H(+)</text>
        <dbReference type="Rhea" id="RHEA:22628"/>
        <dbReference type="ChEBI" id="CHEBI:15378"/>
        <dbReference type="ChEBI" id="CHEBI:29991"/>
        <dbReference type="ChEBI" id="CHEBI:30616"/>
        <dbReference type="ChEBI" id="CHEBI:43474"/>
        <dbReference type="ChEBI" id="CHEBI:58443"/>
        <dbReference type="ChEBI" id="CHEBI:77657"/>
        <dbReference type="ChEBI" id="CHEBI:456216"/>
        <dbReference type="EC" id="6.3.2.6"/>
    </reaction>
</comment>
<comment type="pathway">
    <text evidence="1">Purine metabolism; IMP biosynthesis via de novo pathway; 5-amino-1-(5-phospho-D-ribosyl)imidazole-4-carboxamide from 5-amino-1-(5-phospho-D-ribosyl)imidazole-4-carboxylate: step 1/2.</text>
</comment>
<comment type="similarity">
    <text evidence="1">Belongs to the SAICAR synthetase family.</text>
</comment>
<accession>Q3AHS3</accession>
<proteinExistence type="inferred from homology"/>
<protein>
    <recommendedName>
        <fullName evidence="1">Phosphoribosylaminoimidazole-succinocarboxamide synthase</fullName>
        <ecNumber evidence="1">6.3.2.6</ecNumber>
    </recommendedName>
    <alternativeName>
        <fullName evidence="1">SAICAR synthetase</fullName>
    </alternativeName>
</protein>